<evidence type="ECO:0000255" key="1">
    <source>
        <dbReference type="HAMAP-Rule" id="MF_01316"/>
    </source>
</evidence>
<evidence type="ECO:0000305" key="2"/>
<protein>
    <recommendedName>
        <fullName evidence="1">Photosystem II reaction center protein I</fullName>
        <shortName evidence="1">PSII-I</shortName>
    </recommendedName>
    <alternativeName>
        <fullName evidence="1">PSII 4.8 kDa protein</fullName>
    </alternativeName>
</protein>
<feature type="chain" id="PRO_0000219645" description="Photosystem II reaction center protein I">
    <location>
        <begin position="1"/>
        <end position="36"/>
    </location>
</feature>
<feature type="transmembrane region" description="Helical" evidence="1">
    <location>
        <begin position="4"/>
        <end position="24"/>
    </location>
</feature>
<geneLocation type="chloroplast"/>
<gene>
    <name evidence="1" type="primary">psbI</name>
</gene>
<organism>
    <name type="scientific">Pinus koraiensis</name>
    <name type="common">Korean pine</name>
    <dbReference type="NCBI Taxonomy" id="88728"/>
    <lineage>
        <taxon>Eukaryota</taxon>
        <taxon>Viridiplantae</taxon>
        <taxon>Streptophyta</taxon>
        <taxon>Embryophyta</taxon>
        <taxon>Tracheophyta</taxon>
        <taxon>Spermatophyta</taxon>
        <taxon>Pinopsida</taxon>
        <taxon>Pinidae</taxon>
        <taxon>Conifers I</taxon>
        <taxon>Pinales</taxon>
        <taxon>Pinaceae</taxon>
        <taxon>Pinus</taxon>
        <taxon>Pinus subgen. Strobus</taxon>
    </lineage>
</organism>
<proteinExistence type="inferred from homology"/>
<sequence length="36" mass="4137">MLTLKLFVYAVVVFFISLFIFGFLSNDPGRNPGRKE</sequence>
<dbReference type="EMBL" id="AY228468">
    <property type="protein sequence ID" value="AAO73992.1"/>
    <property type="status" value="ALT_INIT"/>
    <property type="molecule type" value="Genomic_DNA"/>
</dbReference>
<dbReference type="EMBL" id="AY228468">
    <property type="protein sequence ID" value="ABP35310.1"/>
    <property type="status" value="ALT_INIT"/>
    <property type="molecule type" value="Genomic_DNA"/>
</dbReference>
<dbReference type="RefSeq" id="NP_817143.1">
    <property type="nucleotide sequence ID" value="NC_004677.2"/>
</dbReference>
<dbReference type="RefSeq" id="YP_001152064.1">
    <property type="nucleotide sequence ID" value="NC_004677.2"/>
</dbReference>
<dbReference type="SMR" id="Q85X70"/>
<dbReference type="GeneID" id="5048436"/>
<dbReference type="GeneID" id="806927"/>
<dbReference type="GO" id="GO:0009535">
    <property type="term" value="C:chloroplast thylakoid membrane"/>
    <property type="evidence" value="ECO:0007669"/>
    <property type="project" value="UniProtKB-SubCell"/>
</dbReference>
<dbReference type="GO" id="GO:0009539">
    <property type="term" value="C:photosystem II reaction center"/>
    <property type="evidence" value="ECO:0007669"/>
    <property type="project" value="InterPro"/>
</dbReference>
<dbReference type="GO" id="GO:0015979">
    <property type="term" value="P:photosynthesis"/>
    <property type="evidence" value="ECO:0007669"/>
    <property type="project" value="UniProtKB-UniRule"/>
</dbReference>
<dbReference type="HAMAP" id="MF_01316">
    <property type="entry name" value="PSII_PsbI"/>
    <property type="match status" value="1"/>
</dbReference>
<dbReference type="InterPro" id="IPR003686">
    <property type="entry name" value="PSII_PsbI"/>
</dbReference>
<dbReference type="InterPro" id="IPR037271">
    <property type="entry name" value="PSII_PsbI_sf"/>
</dbReference>
<dbReference type="NCBIfam" id="NF002735">
    <property type="entry name" value="PRK02655.1"/>
    <property type="match status" value="1"/>
</dbReference>
<dbReference type="PANTHER" id="PTHR35772">
    <property type="entry name" value="PHOTOSYSTEM II REACTION CENTER PROTEIN I"/>
    <property type="match status" value="1"/>
</dbReference>
<dbReference type="PANTHER" id="PTHR35772:SF1">
    <property type="entry name" value="PHOTOSYSTEM II REACTION CENTER PROTEIN I"/>
    <property type="match status" value="1"/>
</dbReference>
<dbReference type="Pfam" id="PF02532">
    <property type="entry name" value="PsbI"/>
    <property type="match status" value="1"/>
</dbReference>
<dbReference type="SUPFAM" id="SSF161041">
    <property type="entry name" value="Photosystem II reaction center protein I, PsbI"/>
    <property type="match status" value="1"/>
</dbReference>
<keyword id="KW-0150">Chloroplast</keyword>
<keyword id="KW-0472">Membrane</keyword>
<keyword id="KW-0602">Photosynthesis</keyword>
<keyword id="KW-0604">Photosystem II</keyword>
<keyword id="KW-0934">Plastid</keyword>
<keyword id="KW-0674">Reaction center</keyword>
<keyword id="KW-0793">Thylakoid</keyword>
<keyword id="KW-0812">Transmembrane</keyword>
<keyword id="KW-1133">Transmembrane helix</keyword>
<comment type="function">
    <text evidence="1">One of the components of the core complex of photosystem II (PSII), required for its stability and/or assembly. PSII is a light-driven water:plastoquinone oxidoreductase that uses light energy to abstract electrons from H(2)O, generating O(2) and a proton gradient subsequently used for ATP formation. It consists of a core antenna complex that captures photons, and an electron transfer chain that converts photonic excitation into a charge separation.</text>
</comment>
<comment type="subunit">
    <text evidence="1">PSII is composed of 1 copy each of membrane proteins PsbA, PsbB, PsbC, PsbD, PsbE, PsbF, PsbH, PsbI, PsbJ, PsbK, PsbL, PsbM, PsbT, PsbX, PsbY, PsbZ, Psb30/Ycf12, at least 3 peripheral proteins of the oxygen-evolving complex and a large number of cofactors. It forms dimeric complexes.</text>
</comment>
<comment type="subcellular location">
    <subcellularLocation>
        <location evidence="1">Plastid</location>
        <location evidence="1">Chloroplast thylakoid membrane</location>
        <topology evidence="1">Single-pass membrane protein</topology>
    </subcellularLocation>
</comment>
<comment type="similarity">
    <text evidence="1">Belongs to the PsbI family.</text>
</comment>
<comment type="sequence caution" evidence="2">
    <conflict type="erroneous initiation">
        <sequence resource="EMBL-CDS" id="AAO73992"/>
    </conflict>
    <text>Extended N-terminus.</text>
</comment>
<comment type="sequence caution" evidence="2">
    <conflict type="erroneous initiation">
        <sequence resource="EMBL-CDS" id="ABP35310"/>
    </conflict>
    <text>Extended N-terminus.</text>
</comment>
<reference key="1">
    <citation type="submission" date="2003-02" db="EMBL/GenBank/DDBJ databases">
        <title>Complete nucleotide sequence of Pinus koraiensis.</title>
        <authorList>
            <person name="Noh E.W."/>
            <person name="Lee J.S."/>
            <person name="Choi Y.I."/>
            <person name="Han M.S."/>
            <person name="Yi Y.S."/>
            <person name="Han S.U."/>
        </authorList>
    </citation>
    <scope>NUCLEOTIDE SEQUENCE [LARGE SCALE GENOMIC DNA]</scope>
    <source>
        <strain>KangWon16</strain>
    </source>
</reference>
<accession>Q85X70</accession>
<accession>A4QMK5</accession>
<name>PSBI_PINKO</name>